<reference key="1">
    <citation type="journal article" date="1994" name="Virology">
        <title>Equid herpesviruses 1 and 4 encode functional homologs of the herpes simplex virus type 1 virion transactivator protein, VP16.</title>
        <authorList>
            <person name="Purewal A.S."/>
            <person name="Allsopp R."/>
            <person name="Riggio M.P."/>
            <person name="Telford E.A."/>
            <person name="Azam S."/>
            <person name="Davison A.J."/>
            <person name="Edington N."/>
        </authorList>
    </citation>
    <scope>NUCLEOTIDE SEQUENCE [GENOMIC DNA]</scope>
</reference>
<reference key="2">
    <citation type="journal article" date="1991" name="J. Virol.">
        <title>Antigenic and protein sequence homology between VP13/14, a herpes simplex virus type 1 tegument protein, and gp10, a glycoprotein of equine herpesvirus 1 and 4.</title>
        <authorList>
            <person name="Whittaker G.R."/>
            <person name="Riggio M.P."/>
            <person name="Halliburton I.W."/>
            <person name="Killington R.A."/>
            <person name="Allen G.P."/>
            <person name="Meredith D.M."/>
        </authorList>
    </citation>
    <scope>NUCLEOTIDE SEQUENCE [GENOMIC DNA] OF 1-211 AND 406-454</scope>
</reference>
<organism>
    <name type="scientific">Equine herpesvirus 4 (strain 1942)</name>
    <name type="common">EHV-4</name>
    <name type="synonym">Equine rhinopneumonitis virus</name>
    <dbReference type="NCBI Taxonomy" id="10333"/>
    <lineage>
        <taxon>Viruses</taxon>
        <taxon>Duplodnaviria</taxon>
        <taxon>Heunggongvirae</taxon>
        <taxon>Peploviricota</taxon>
        <taxon>Herviviricetes</taxon>
        <taxon>Herpesvirales</taxon>
        <taxon>Orthoherpesviridae</taxon>
        <taxon>Alphaherpesvirinae</taxon>
        <taxon>Varicellovirus</taxon>
        <taxon>Varicellovirus equidalpha4</taxon>
        <taxon>Equid alphaherpesvirus 4</taxon>
    </lineage>
</organism>
<name>VP16_EHV4</name>
<comment type="function">
    <text evidence="1">Transcriptional activator of immediate-early (IE) gene products (alpha genes). Acts as a key activator of lytic infection by initiating the lytic program through the assembly of the transcriptional regulatory VP16-induced complex composed of VP16 and two cellular factors, HCFC1 and POU2F1. VP16-induced complex represents a regulatory switch: when it is on, it promotes IE-gene expression and thus lytic infection, and when it is off, it limits IE-gene transcription favoring latent infection (By similarity).</text>
</comment>
<comment type="function">
    <text evidence="3">May play a role in the aggregation of tegument proteins around nucleocapsids during virus morphogenesis.</text>
</comment>
<comment type="subunit">
    <text evidence="1">Associates with the VP16-induced complex; binding to host HCFC1 activates VP16 for association with the octamer motif-binding host protein POU2F1, to form a multiprotein-DNA complex responsible for activating transcription of the viral immediate early genes.</text>
</comment>
<comment type="subcellular location">
    <subcellularLocation>
        <location evidence="2">Virion tegument</location>
    </subcellularLocation>
    <subcellularLocation>
        <location evidence="2">Host nucleus</location>
    </subcellularLocation>
</comment>
<comment type="similarity">
    <text evidence="3">Belongs to the herpesviridae tegument protein VP16 protein family.</text>
</comment>
<proteinExistence type="inferred from homology"/>
<organismHost>
    <name type="scientific">Equus caballus</name>
    <name type="common">Horse</name>
    <dbReference type="NCBI Taxonomy" id="9796"/>
</organismHost>
<gene>
    <name type="primary">12</name>
    <name type="synonym">B5</name>
</gene>
<protein>
    <recommendedName>
        <fullName>Tegument protein VP16 homolog</fullName>
    </recommendedName>
    <alternativeName>
        <fullName>Alpha trans-inducing protein</fullName>
    </alternativeName>
    <alternativeName>
        <fullName>Alpha-TIF</fullName>
    </alternativeName>
</protein>
<evidence type="ECO:0000250" key="1"/>
<evidence type="ECO:0000250" key="2">
    <source>
        <dbReference type="UniProtKB" id="P04486"/>
    </source>
</evidence>
<evidence type="ECO:0000305" key="3"/>
<sequence length="454" mass="51180">MAANIAMFADIEDYDDTRSCEYGYGTCELMDVDGVVASFDEGMLSASESIYSSPAQKRLALPPPKATSPTALYQRLQAELGFPEGQAMLFAMEKWNEDMFSAIPVHVDLYTEIALLSTSVNEVVKAGLDSLPIPTNYIPEVDLNAHGSEPFPEVPALEDELETYVISAQRFYLSELRAREEHYSRLLRGYCVALLHYLYGSAKRQLRGAGSDSALMHKFKQVVRDRYYRETANLARLLYLHLYISVTREVSWRLHASQVVNQGIFVSLHYTWPQRRKFECLFHPVLFNHGVVILENDPLEFNDLQRINYRRRELGLPLIRAGLIEEENLPLESEPTFSGKLPRTIGFLTHQIRTKMEAYSNAHPSTPLFPLAEHSYSKRIDGRLSYGTTAEAMMDPPSPSAVLPGDPVPPLTVGIRQTAETLALPSNLTLQSMETDVLDYSSISGDELNQMFDI</sequence>
<accession>Q00028</accession>
<keyword id="KW-0238">DNA-binding</keyword>
<keyword id="KW-1048">Host nucleus</keyword>
<keyword id="KW-0945">Host-virus interaction</keyword>
<keyword id="KW-0597">Phosphoprotein</keyword>
<keyword id="KW-0804">Transcription</keyword>
<keyword id="KW-0805">Transcription regulation</keyword>
<keyword id="KW-0946">Virion</keyword>
<keyword id="KW-0920">Virion tegument</keyword>
<feature type="chain" id="PRO_0000115804" description="Tegument protein VP16 homolog">
    <location>
        <begin position="1"/>
        <end position="454"/>
    </location>
</feature>
<dbReference type="EMBL" id="L16590">
    <property type="protein sequence ID" value="AAA16563.1"/>
    <property type="molecule type" value="Unassigned_DNA"/>
</dbReference>
<dbReference type="EMBL" id="X17684">
    <property type="protein sequence ID" value="CAA35675.1"/>
    <property type="molecule type" value="Genomic_DNA"/>
</dbReference>
<dbReference type="PIR" id="A49285">
    <property type="entry name" value="A49285"/>
</dbReference>
<dbReference type="SMR" id="Q00028"/>
<dbReference type="GO" id="GO:0042025">
    <property type="term" value="C:host cell nucleus"/>
    <property type="evidence" value="ECO:0007669"/>
    <property type="project" value="UniProtKB-SubCell"/>
</dbReference>
<dbReference type="GO" id="GO:0019033">
    <property type="term" value="C:viral tegument"/>
    <property type="evidence" value="ECO:0007669"/>
    <property type="project" value="UniProtKB-SubCell"/>
</dbReference>
<dbReference type="GO" id="GO:0003677">
    <property type="term" value="F:DNA binding"/>
    <property type="evidence" value="ECO:0007669"/>
    <property type="project" value="UniProtKB-KW"/>
</dbReference>
<dbReference type="GO" id="GO:0039695">
    <property type="term" value="P:DNA-templated viral transcription"/>
    <property type="evidence" value="ECO:0000250"/>
    <property type="project" value="UniProtKB"/>
</dbReference>
<dbReference type="GO" id="GO:0006355">
    <property type="term" value="P:regulation of DNA-templated transcription"/>
    <property type="evidence" value="ECO:0007669"/>
    <property type="project" value="InterPro"/>
</dbReference>
<dbReference type="FunFam" id="1.10.1290.10:FF:000001">
    <property type="entry name" value="Tegument protein VP16"/>
    <property type="match status" value="1"/>
</dbReference>
<dbReference type="Gene3D" id="1.10.1290.10">
    <property type="entry name" value="Alpha trans-inducing (Alpha-TIF)"/>
    <property type="match status" value="1"/>
</dbReference>
<dbReference type="InterPro" id="IPR003174">
    <property type="entry name" value="Alpha_TIF"/>
</dbReference>
<dbReference type="InterPro" id="IPR036538">
    <property type="entry name" value="Alpha_TIF_sf"/>
</dbReference>
<dbReference type="Pfam" id="PF02232">
    <property type="entry name" value="Alpha_TIF"/>
    <property type="match status" value="1"/>
</dbReference>
<dbReference type="SMART" id="SM00814">
    <property type="entry name" value="Alpha_TIF"/>
    <property type="match status" value="1"/>
</dbReference>
<dbReference type="SUPFAM" id="SSF56548">
    <property type="entry name" value="Conserved core of transcriptional regulatory protein vp16"/>
    <property type="match status" value="1"/>
</dbReference>